<protein>
    <recommendedName>
        <fullName>Lipase 1</fullName>
        <ecNumber>3.1.1.3</ecNumber>
    </recommendedName>
    <alternativeName>
        <fullName>Glycerol ester hydrolase 1</fullName>
    </alternativeName>
</protein>
<accession>P65289</accession>
<accession>Q99QX0</accession>
<gene>
    <name type="primary">lip1</name>
    <name type="ordered locus">SA2463</name>
</gene>
<reference key="1">
    <citation type="journal article" date="2001" name="Lancet">
        <title>Whole genome sequencing of meticillin-resistant Staphylococcus aureus.</title>
        <authorList>
            <person name="Kuroda M."/>
            <person name="Ohta T."/>
            <person name="Uchiyama I."/>
            <person name="Baba T."/>
            <person name="Yuzawa H."/>
            <person name="Kobayashi I."/>
            <person name="Cui L."/>
            <person name="Oguchi A."/>
            <person name="Aoki K."/>
            <person name="Nagai Y."/>
            <person name="Lian J.-Q."/>
            <person name="Ito T."/>
            <person name="Kanamori M."/>
            <person name="Matsumaru H."/>
            <person name="Maruyama A."/>
            <person name="Murakami H."/>
            <person name="Hosoyama A."/>
            <person name="Mizutani-Ui Y."/>
            <person name="Takahashi N.K."/>
            <person name="Sawano T."/>
            <person name="Inoue R."/>
            <person name="Kaito C."/>
            <person name="Sekimizu K."/>
            <person name="Hirakawa H."/>
            <person name="Kuhara S."/>
            <person name="Goto S."/>
            <person name="Yabuzaki J."/>
            <person name="Kanehisa M."/>
            <person name="Yamashita A."/>
            <person name="Oshima K."/>
            <person name="Furuya K."/>
            <person name="Yoshino C."/>
            <person name="Shiba T."/>
            <person name="Hattori M."/>
            <person name="Ogasawara N."/>
            <person name="Hayashi H."/>
            <person name="Hiramatsu K."/>
        </authorList>
    </citation>
    <scope>NUCLEOTIDE SEQUENCE [LARGE SCALE GENOMIC DNA]</scope>
    <source>
        <strain>N315</strain>
    </source>
</reference>
<organism>
    <name type="scientific">Staphylococcus aureus (strain N315)</name>
    <dbReference type="NCBI Taxonomy" id="158879"/>
    <lineage>
        <taxon>Bacteria</taxon>
        <taxon>Bacillati</taxon>
        <taxon>Bacillota</taxon>
        <taxon>Bacilli</taxon>
        <taxon>Bacillales</taxon>
        <taxon>Staphylococcaceae</taxon>
        <taxon>Staphylococcus</taxon>
    </lineage>
</organism>
<name>LIP1_STAAN</name>
<keyword id="KW-0106">Calcium</keyword>
<keyword id="KW-0378">Hydrolase</keyword>
<keyword id="KW-0442">Lipid degradation</keyword>
<keyword id="KW-0443">Lipid metabolism</keyword>
<keyword id="KW-0479">Metal-binding</keyword>
<keyword id="KW-0964">Secreted</keyword>
<keyword id="KW-0732">Signal</keyword>
<keyword id="KW-0865">Zymogen</keyword>
<comment type="catalytic activity">
    <reaction>
        <text>a triacylglycerol + H2O = a diacylglycerol + a fatty acid + H(+)</text>
        <dbReference type="Rhea" id="RHEA:12044"/>
        <dbReference type="ChEBI" id="CHEBI:15377"/>
        <dbReference type="ChEBI" id="CHEBI:15378"/>
        <dbReference type="ChEBI" id="CHEBI:17855"/>
        <dbReference type="ChEBI" id="CHEBI:18035"/>
        <dbReference type="ChEBI" id="CHEBI:28868"/>
        <dbReference type="EC" id="3.1.1.3"/>
    </reaction>
</comment>
<comment type="subcellular location">
    <subcellularLocation>
        <location evidence="1">Secreted</location>
    </subcellularLocation>
</comment>
<comment type="similarity">
    <text evidence="5">Belongs to the AB hydrolase superfamily. Lipase family.</text>
</comment>
<comment type="sequence caution" evidence="5">
    <conflict type="erroneous initiation">
        <sequence resource="EMBL-CDS" id="BAB43769"/>
    </conflict>
    <text>Extended N-terminus.</text>
</comment>
<proteinExistence type="inferred from homology"/>
<sequence length="680" mass="76531">MKSQNKYSIRKFSVGASSILIATLLFLSGGQAQAAEKQVNMGNSQEDTVTAQSIGDQQTRENANYQRENGVDEQQHTENLTKNLHNDKTISEENHRKTDDLNKDQLKDDKNSSLNNKNIQRDTTKNNNANPSDVNQGLEQAINDGKQSKVASQQQSKEVDNSQDSNANNNLPSQSLTKEAPSLNKSDQTSQREIVNETEIEKVQPQQNNQANDKITNHNFNNEQEVKPQKDEKTLSVSDLKNNQKSPVEPTKDNDKKNGLNLLKSSAVATLPNKGTKELTAKAKDDQTNKVAKQGQYKNQDPIVLVHGFNGFTDDINPSVLAHYWGGNKMNIRQDLEENGYKAYEASISAFGSNYDRAVELYYYIKGGRVDYGAAHAAKYGHERYGKTYEGIYKDWKPGQKVHLVGHSMGGQTIRQLEELLRNGNREEIEYQKKHGGEISPLFKGNNDNMISSITTLGTPHNGTHASDLAGNEALVRQIVFDIGKMFGNKNSRVDFGLAQWGLKQKPNESYIDYVKRVKQSNLWKSKDNGFYDLTREGATDLNRKTSLNPNIVYKTYTGEATHKALNSDRQKADLNMFFPFVITGNLIGKATEKEWRENDGLVSVISSQHPFNQAYTNATDKIQKGIWQVTPTKHDWDHVDFVGQDSSDTVRTREELQDFWHHLADDLVKTEKVTDTKQA</sequence>
<evidence type="ECO:0000250" key="1"/>
<evidence type="ECO:0000255" key="2"/>
<evidence type="ECO:0000255" key="3">
    <source>
        <dbReference type="PROSITE-ProRule" id="PRU10037"/>
    </source>
</evidence>
<evidence type="ECO:0000256" key="4">
    <source>
        <dbReference type="SAM" id="MobiDB-lite"/>
    </source>
</evidence>
<evidence type="ECO:0000305" key="5"/>
<dbReference type="EC" id="3.1.1.3"/>
<dbReference type="EMBL" id="BA000018">
    <property type="protein sequence ID" value="BAB43769.1"/>
    <property type="status" value="ALT_INIT"/>
    <property type="molecule type" value="Genomic_DNA"/>
</dbReference>
<dbReference type="PIR" id="G90075">
    <property type="entry name" value="G90075"/>
</dbReference>
<dbReference type="RefSeq" id="WP_000842040.1">
    <property type="nucleotide sequence ID" value="NC_002745.2"/>
</dbReference>
<dbReference type="SMR" id="P65289"/>
<dbReference type="ESTHER" id="staau-LIP">
    <property type="family name" value="Bacterial_lip_FamI.6"/>
</dbReference>
<dbReference type="EnsemblBacteria" id="BAB43769">
    <property type="protein sequence ID" value="BAB43769"/>
    <property type="gene ID" value="BAB43769"/>
</dbReference>
<dbReference type="KEGG" id="sau:SA2463"/>
<dbReference type="HOGENOM" id="CLU_023555_2_1_9"/>
<dbReference type="GO" id="GO:0005576">
    <property type="term" value="C:extracellular region"/>
    <property type="evidence" value="ECO:0007669"/>
    <property type="project" value="UniProtKB-SubCell"/>
</dbReference>
<dbReference type="GO" id="GO:0046872">
    <property type="term" value="F:metal ion binding"/>
    <property type="evidence" value="ECO:0007669"/>
    <property type="project" value="UniProtKB-KW"/>
</dbReference>
<dbReference type="GO" id="GO:0004806">
    <property type="term" value="F:triacylglycerol lipase activity"/>
    <property type="evidence" value="ECO:0007669"/>
    <property type="project" value="UniProtKB-EC"/>
</dbReference>
<dbReference type="GO" id="GO:0016042">
    <property type="term" value="P:lipid catabolic process"/>
    <property type="evidence" value="ECO:0007669"/>
    <property type="project" value="UniProtKB-KW"/>
</dbReference>
<dbReference type="Gene3D" id="3.40.50.1820">
    <property type="entry name" value="alpha/beta hydrolase"/>
    <property type="match status" value="1"/>
</dbReference>
<dbReference type="InterPro" id="IPR029058">
    <property type="entry name" value="AB_hydrolase_fold"/>
</dbReference>
<dbReference type="InterPro" id="IPR056304">
    <property type="entry name" value="Lip-like_C"/>
</dbReference>
<dbReference type="InterPro" id="IPR005877">
    <property type="entry name" value="YSIRK_signal_dom"/>
</dbReference>
<dbReference type="NCBIfam" id="NF047351">
    <property type="entry name" value="lipase_YSIRK_Sa"/>
    <property type="match status" value="1"/>
</dbReference>
<dbReference type="NCBIfam" id="TIGR01168">
    <property type="entry name" value="YSIRK_signal"/>
    <property type="match status" value="1"/>
</dbReference>
<dbReference type="PANTHER" id="PTHR34043">
    <property type="entry name" value="ALPHA/BETA-HYDROLASES SUPERFAMILY PROTEIN"/>
    <property type="match status" value="1"/>
</dbReference>
<dbReference type="PANTHER" id="PTHR34043:SF3">
    <property type="entry name" value="ALPHA_BETA-HYDROLASES SUPERFAMILY PROTEIN"/>
    <property type="match status" value="1"/>
</dbReference>
<dbReference type="Pfam" id="PF24708">
    <property type="entry name" value="Lip_C"/>
    <property type="match status" value="1"/>
</dbReference>
<dbReference type="Pfam" id="PF04650">
    <property type="entry name" value="YSIRK_signal"/>
    <property type="match status" value="1"/>
</dbReference>
<dbReference type="SUPFAM" id="SSF53474">
    <property type="entry name" value="alpha/beta-Hydrolases"/>
    <property type="match status" value="1"/>
</dbReference>
<dbReference type="PROSITE" id="PS00120">
    <property type="entry name" value="LIPASE_SER"/>
    <property type="match status" value="1"/>
</dbReference>
<feature type="signal peptide" evidence="2">
    <location>
        <begin position="1"/>
        <end position="34"/>
    </location>
</feature>
<feature type="propeptide" id="PRO_0000017750" evidence="1">
    <location>
        <begin position="35"/>
        <end position="290"/>
    </location>
</feature>
<feature type="chain" id="PRO_0000017751" description="Lipase 1">
    <location>
        <begin position="291"/>
        <end position="680"/>
    </location>
</feature>
<feature type="region of interest" description="Disordered" evidence="4">
    <location>
        <begin position="82"/>
        <end position="259"/>
    </location>
</feature>
<feature type="compositionally biased region" description="Basic and acidic residues" evidence="4">
    <location>
        <begin position="84"/>
        <end position="111"/>
    </location>
</feature>
<feature type="compositionally biased region" description="Polar residues" evidence="4">
    <location>
        <begin position="125"/>
        <end position="138"/>
    </location>
</feature>
<feature type="compositionally biased region" description="Polar residues" evidence="4">
    <location>
        <begin position="162"/>
        <end position="193"/>
    </location>
</feature>
<feature type="compositionally biased region" description="Polar residues" evidence="4">
    <location>
        <begin position="204"/>
        <end position="223"/>
    </location>
</feature>
<feature type="compositionally biased region" description="Basic and acidic residues" evidence="4">
    <location>
        <begin position="224"/>
        <end position="234"/>
    </location>
</feature>
<feature type="compositionally biased region" description="Polar residues" evidence="4">
    <location>
        <begin position="235"/>
        <end position="246"/>
    </location>
</feature>
<feature type="active site" description="Nucleophile" evidence="1">
    <location>
        <position position="408"/>
    </location>
</feature>
<feature type="active site" description="Charge relay system" evidence="3">
    <location>
        <position position="600"/>
    </location>
</feature>
<feature type="active site" description="Charge relay system" evidence="3">
    <location>
        <position position="639"/>
    </location>
</feature>
<feature type="binding site" evidence="1">
    <location>
        <position position="638"/>
    </location>
    <ligand>
        <name>Ca(2+)</name>
        <dbReference type="ChEBI" id="CHEBI:29108"/>
    </ligand>
</feature>
<feature type="binding site" evidence="1">
    <location>
        <position position="641"/>
    </location>
    <ligand>
        <name>Ca(2+)</name>
        <dbReference type="ChEBI" id="CHEBI:29108"/>
    </ligand>
</feature>
<feature type="binding site" evidence="1">
    <location>
        <position position="646"/>
    </location>
    <ligand>
        <name>Ca(2+)</name>
        <dbReference type="ChEBI" id="CHEBI:29108"/>
    </ligand>
</feature>
<feature type="binding site" evidence="1">
    <location>
        <position position="649"/>
    </location>
    <ligand>
        <name>Ca(2+)</name>
        <dbReference type="ChEBI" id="CHEBI:29108"/>
    </ligand>
</feature>